<sequence>MHEAQIRVAIAGAGGRMGRQLIQAAMAMEGVQLGAALEREGSSLLGSDAGELAGVGKSGVIVQSSLEAVKDDFDVFIDFTRPEGTLTHLAFCRQHGKGMVIGTTGFDDAGKQAIREASQEIAIVFAANFSVGVNVMLKLLEKAAKVMGDYSDIEIIEAHHRHKVDAPSGTALAMGEAIAGALDKNLKDCAVYSREGYTGERVPGTIGFATVRAGDIVGEHTAMFADIGERVEITHKASSRMTFANGALRSALWLKTKKNGLFDMRDVLGLDVL</sequence>
<evidence type="ECO:0000255" key="1">
    <source>
        <dbReference type="HAMAP-Rule" id="MF_00102"/>
    </source>
</evidence>
<evidence type="ECO:0000305" key="2"/>
<organism>
    <name type="scientific">Salmonella gallinarum (strain 287/91 / NCTC 13346)</name>
    <dbReference type="NCBI Taxonomy" id="550538"/>
    <lineage>
        <taxon>Bacteria</taxon>
        <taxon>Pseudomonadati</taxon>
        <taxon>Pseudomonadota</taxon>
        <taxon>Gammaproteobacteria</taxon>
        <taxon>Enterobacterales</taxon>
        <taxon>Enterobacteriaceae</taxon>
        <taxon>Salmonella</taxon>
    </lineage>
</organism>
<accession>B5RG99</accession>
<protein>
    <recommendedName>
        <fullName evidence="1">4-hydroxy-tetrahydrodipicolinate reductase</fullName>
        <shortName evidence="1">HTPA reductase</shortName>
        <ecNumber evidence="1">1.17.1.8</ecNumber>
    </recommendedName>
</protein>
<proteinExistence type="inferred from homology"/>
<feature type="chain" id="PRO_1000093997" description="4-hydroxy-tetrahydrodipicolinate reductase">
    <location>
        <begin position="1"/>
        <end position="273"/>
    </location>
</feature>
<feature type="active site" description="Proton donor/acceptor" evidence="1">
    <location>
        <position position="159"/>
    </location>
</feature>
<feature type="active site" description="Proton donor" evidence="1">
    <location>
        <position position="163"/>
    </location>
</feature>
<feature type="binding site" evidence="1">
    <location>
        <begin position="12"/>
        <end position="17"/>
    </location>
    <ligand>
        <name>NAD(+)</name>
        <dbReference type="ChEBI" id="CHEBI:57540"/>
    </ligand>
</feature>
<feature type="binding site" evidence="1">
    <location>
        <position position="38"/>
    </location>
    <ligand>
        <name>NAD(+)</name>
        <dbReference type="ChEBI" id="CHEBI:57540"/>
    </ligand>
</feature>
<feature type="binding site" evidence="1">
    <location>
        <position position="39"/>
    </location>
    <ligand>
        <name>NADP(+)</name>
        <dbReference type="ChEBI" id="CHEBI:58349"/>
    </ligand>
</feature>
<feature type="binding site" evidence="1">
    <location>
        <begin position="102"/>
        <end position="104"/>
    </location>
    <ligand>
        <name>NAD(+)</name>
        <dbReference type="ChEBI" id="CHEBI:57540"/>
    </ligand>
</feature>
<feature type="binding site" evidence="1">
    <location>
        <begin position="126"/>
        <end position="129"/>
    </location>
    <ligand>
        <name>NAD(+)</name>
        <dbReference type="ChEBI" id="CHEBI:57540"/>
    </ligand>
</feature>
<feature type="binding site" evidence="1">
    <location>
        <position position="160"/>
    </location>
    <ligand>
        <name>(S)-2,3,4,5-tetrahydrodipicolinate</name>
        <dbReference type="ChEBI" id="CHEBI:16845"/>
    </ligand>
</feature>
<feature type="binding site" evidence="1">
    <location>
        <begin position="169"/>
        <end position="170"/>
    </location>
    <ligand>
        <name>(S)-2,3,4,5-tetrahydrodipicolinate</name>
        <dbReference type="ChEBI" id="CHEBI:16845"/>
    </ligand>
</feature>
<gene>
    <name evidence="1" type="primary">dapB</name>
    <name type="ordered locus">SG0068</name>
</gene>
<comment type="function">
    <text evidence="1">Catalyzes the conversion of 4-hydroxy-tetrahydrodipicolinate (HTPA) to tetrahydrodipicolinate.</text>
</comment>
<comment type="catalytic activity">
    <reaction evidence="1">
        <text>(S)-2,3,4,5-tetrahydrodipicolinate + NAD(+) + H2O = (2S,4S)-4-hydroxy-2,3,4,5-tetrahydrodipicolinate + NADH + H(+)</text>
        <dbReference type="Rhea" id="RHEA:35323"/>
        <dbReference type="ChEBI" id="CHEBI:15377"/>
        <dbReference type="ChEBI" id="CHEBI:15378"/>
        <dbReference type="ChEBI" id="CHEBI:16845"/>
        <dbReference type="ChEBI" id="CHEBI:57540"/>
        <dbReference type="ChEBI" id="CHEBI:57945"/>
        <dbReference type="ChEBI" id="CHEBI:67139"/>
        <dbReference type="EC" id="1.17.1.8"/>
    </reaction>
</comment>
<comment type="catalytic activity">
    <reaction evidence="1">
        <text>(S)-2,3,4,5-tetrahydrodipicolinate + NADP(+) + H2O = (2S,4S)-4-hydroxy-2,3,4,5-tetrahydrodipicolinate + NADPH + H(+)</text>
        <dbReference type="Rhea" id="RHEA:35331"/>
        <dbReference type="ChEBI" id="CHEBI:15377"/>
        <dbReference type="ChEBI" id="CHEBI:15378"/>
        <dbReference type="ChEBI" id="CHEBI:16845"/>
        <dbReference type="ChEBI" id="CHEBI:57783"/>
        <dbReference type="ChEBI" id="CHEBI:58349"/>
        <dbReference type="ChEBI" id="CHEBI:67139"/>
        <dbReference type="EC" id="1.17.1.8"/>
    </reaction>
</comment>
<comment type="pathway">
    <text evidence="1">Amino-acid biosynthesis; L-lysine biosynthesis via DAP pathway; (S)-tetrahydrodipicolinate from L-aspartate: step 4/4.</text>
</comment>
<comment type="subunit">
    <text evidence="1">Homotetramer.</text>
</comment>
<comment type="subcellular location">
    <subcellularLocation>
        <location evidence="1">Cytoplasm</location>
    </subcellularLocation>
</comment>
<comment type="similarity">
    <text evidence="1">Belongs to the DapB family.</text>
</comment>
<comment type="caution">
    <text evidence="2">Was originally thought to be a dihydrodipicolinate reductase (DHDPR), catalyzing the conversion of dihydrodipicolinate to tetrahydrodipicolinate. However, it was shown in E.coli that the substrate of the enzymatic reaction is not dihydrodipicolinate (DHDP) but in fact (2S,4S)-4-hydroxy-2,3,4,5-tetrahydrodipicolinic acid (HTPA), the product released by the DapA-catalyzed reaction.</text>
</comment>
<name>DAPB_SALG2</name>
<keyword id="KW-0028">Amino-acid biosynthesis</keyword>
<keyword id="KW-0963">Cytoplasm</keyword>
<keyword id="KW-0220">Diaminopimelate biosynthesis</keyword>
<keyword id="KW-0457">Lysine biosynthesis</keyword>
<keyword id="KW-0520">NAD</keyword>
<keyword id="KW-0521">NADP</keyword>
<keyword id="KW-0560">Oxidoreductase</keyword>
<dbReference type="EC" id="1.17.1.8" evidence="1"/>
<dbReference type="EMBL" id="AM933173">
    <property type="protein sequence ID" value="CAR35975.1"/>
    <property type="molecule type" value="Genomic_DNA"/>
</dbReference>
<dbReference type="RefSeq" id="WP_000544037.1">
    <property type="nucleotide sequence ID" value="NC_011274.1"/>
</dbReference>
<dbReference type="SMR" id="B5RG99"/>
<dbReference type="KEGG" id="seg:SG0068"/>
<dbReference type="HOGENOM" id="CLU_047479_2_1_6"/>
<dbReference type="UniPathway" id="UPA00034">
    <property type="reaction ID" value="UER00018"/>
</dbReference>
<dbReference type="Proteomes" id="UP000008321">
    <property type="component" value="Chromosome"/>
</dbReference>
<dbReference type="GO" id="GO:0005829">
    <property type="term" value="C:cytosol"/>
    <property type="evidence" value="ECO:0007669"/>
    <property type="project" value="TreeGrafter"/>
</dbReference>
<dbReference type="GO" id="GO:0008839">
    <property type="term" value="F:4-hydroxy-tetrahydrodipicolinate reductase"/>
    <property type="evidence" value="ECO:0007669"/>
    <property type="project" value="UniProtKB-EC"/>
</dbReference>
<dbReference type="GO" id="GO:0051287">
    <property type="term" value="F:NAD binding"/>
    <property type="evidence" value="ECO:0007669"/>
    <property type="project" value="UniProtKB-UniRule"/>
</dbReference>
<dbReference type="GO" id="GO:0050661">
    <property type="term" value="F:NADP binding"/>
    <property type="evidence" value="ECO:0007669"/>
    <property type="project" value="UniProtKB-UniRule"/>
</dbReference>
<dbReference type="GO" id="GO:0016726">
    <property type="term" value="F:oxidoreductase activity, acting on CH or CH2 groups, NAD or NADP as acceptor"/>
    <property type="evidence" value="ECO:0007669"/>
    <property type="project" value="UniProtKB-UniRule"/>
</dbReference>
<dbReference type="GO" id="GO:0019877">
    <property type="term" value="P:diaminopimelate biosynthetic process"/>
    <property type="evidence" value="ECO:0007669"/>
    <property type="project" value="UniProtKB-UniRule"/>
</dbReference>
<dbReference type="GO" id="GO:0009089">
    <property type="term" value="P:lysine biosynthetic process via diaminopimelate"/>
    <property type="evidence" value="ECO:0007669"/>
    <property type="project" value="UniProtKB-UniRule"/>
</dbReference>
<dbReference type="CDD" id="cd02274">
    <property type="entry name" value="DHDPR_N"/>
    <property type="match status" value="1"/>
</dbReference>
<dbReference type="FunFam" id="3.30.360.10:FF:000004">
    <property type="entry name" value="4-hydroxy-tetrahydrodipicolinate reductase"/>
    <property type="match status" value="1"/>
</dbReference>
<dbReference type="FunFam" id="3.40.50.720:FF:000048">
    <property type="entry name" value="4-hydroxy-tetrahydrodipicolinate reductase"/>
    <property type="match status" value="1"/>
</dbReference>
<dbReference type="Gene3D" id="3.30.360.10">
    <property type="entry name" value="Dihydrodipicolinate Reductase, domain 2"/>
    <property type="match status" value="1"/>
</dbReference>
<dbReference type="Gene3D" id="3.40.50.720">
    <property type="entry name" value="NAD(P)-binding Rossmann-like Domain"/>
    <property type="match status" value="1"/>
</dbReference>
<dbReference type="HAMAP" id="MF_00102">
    <property type="entry name" value="DapB"/>
    <property type="match status" value="1"/>
</dbReference>
<dbReference type="InterPro" id="IPR022663">
    <property type="entry name" value="DapB_C"/>
</dbReference>
<dbReference type="InterPro" id="IPR000846">
    <property type="entry name" value="DapB_N"/>
</dbReference>
<dbReference type="InterPro" id="IPR022664">
    <property type="entry name" value="DapB_N_CS"/>
</dbReference>
<dbReference type="InterPro" id="IPR023940">
    <property type="entry name" value="DHDPR_bac"/>
</dbReference>
<dbReference type="InterPro" id="IPR036291">
    <property type="entry name" value="NAD(P)-bd_dom_sf"/>
</dbReference>
<dbReference type="NCBIfam" id="TIGR00036">
    <property type="entry name" value="dapB"/>
    <property type="match status" value="1"/>
</dbReference>
<dbReference type="PANTHER" id="PTHR20836:SF0">
    <property type="entry name" value="4-HYDROXY-TETRAHYDRODIPICOLINATE REDUCTASE 1, CHLOROPLASTIC-RELATED"/>
    <property type="match status" value="1"/>
</dbReference>
<dbReference type="PANTHER" id="PTHR20836">
    <property type="entry name" value="DIHYDRODIPICOLINATE REDUCTASE"/>
    <property type="match status" value="1"/>
</dbReference>
<dbReference type="Pfam" id="PF05173">
    <property type="entry name" value="DapB_C"/>
    <property type="match status" value="1"/>
</dbReference>
<dbReference type="Pfam" id="PF01113">
    <property type="entry name" value="DapB_N"/>
    <property type="match status" value="1"/>
</dbReference>
<dbReference type="PIRSF" id="PIRSF000161">
    <property type="entry name" value="DHPR"/>
    <property type="match status" value="1"/>
</dbReference>
<dbReference type="SUPFAM" id="SSF55347">
    <property type="entry name" value="Glyceraldehyde-3-phosphate dehydrogenase-like, C-terminal domain"/>
    <property type="match status" value="1"/>
</dbReference>
<dbReference type="SUPFAM" id="SSF51735">
    <property type="entry name" value="NAD(P)-binding Rossmann-fold domains"/>
    <property type="match status" value="1"/>
</dbReference>
<dbReference type="PROSITE" id="PS01298">
    <property type="entry name" value="DAPB"/>
    <property type="match status" value="1"/>
</dbReference>
<reference key="1">
    <citation type="journal article" date="2008" name="Genome Res.">
        <title>Comparative genome analysis of Salmonella enteritidis PT4 and Salmonella gallinarum 287/91 provides insights into evolutionary and host adaptation pathways.</title>
        <authorList>
            <person name="Thomson N.R."/>
            <person name="Clayton D.J."/>
            <person name="Windhorst D."/>
            <person name="Vernikos G."/>
            <person name="Davidson S."/>
            <person name="Churcher C."/>
            <person name="Quail M.A."/>
            <person name="Stevens M."/>
            <person name="Jones M.A."/>
            <person name="Watson M."/>
            <person name="Barron A."/>
            <person name="Layton A."/>
            <person name="Pickard D."/>
            <person name="Kingsley R.A."/>
            <person name="Bignell A."/>
            <person name="Clark L."/>
            <person name="Harris B."/>
            <person name="Ormond D."/>
            <person name="Abdellah Z."/>
            <person name="Brooks K."/>
            <person name="Cherevach I."/>
            <person name="Chillingworth T."/>
            <person name="Woodward J."/>
            <person name="Norberczak H."/>
            <person name="Lord A."/>
            <person name="Arrowsmith C."/>
            <person name="Jagels K."/>
            <person name="Moule S."/>
            <person name="Mungall K."/>
            <person name="Saunders M."/>
            <person name="Whitehead S."/>
            <person name="Chabalgoity J.A."/>
            <person name="Maskell D."/>
            <person name="Humphreys T."/>
            <person name="Roberts M."/>
            <person name="Barrow P.A."/>
            <person name="Dougan G."/>
            <person name="Parkhill J."/>
        </authorList>
    </citation>
    <scope>NUCLEOTIDE SEQUENCE [LARGE SCALE GENOMIC DNA]</scope>
    <source>
        <strain>287/91 / NCTC 13346</strain>
    </source>
</reference>